<feature type="chain" id="PRO_0000321468" description="Thymidylate synthase">
    <location>
        <begin position="1"/>
        <end position="273"/>
    </location>
</feature>
<feature type="active site" description="Nucleophile" evidence="1">
    <location>
        <position position="156"/>
    </location>
</feature>
<feature type="binding site" description="in other chain" evidence="1">
    <location>
        <position position="31"/>
    </location>
    <ligand>
        <name>dUMP</name>
        <dbReference type="ChEBI" id="CHEBI:246422"/>
        <note>ligand shared between dimeric partners</note>
    </ligand>
</feature>
<feature type="binding site" evidence="1">
    <location>
        <position position="61"/>
    </location>
    <ligand>
        <name>(6R)-5,10-methylene-5,6,7,8-tetrahydrofolate</name>
        <dbReference type="ChEBI" id="CHEBI:15636"/>
    </ligand>
</feature>
<feature type="binding site" evidence="1">
    <location>
        <begin position="136"/>
        <end position="137"/>
    </location>
    <ligand>
        <name>dUMP</name>
        <dbReference type="ChEBI" id="CHEBI:246422"/>
        <note>ligand shared between dimeric partners</note>
    </ligand>
</feature>
<feature type="binding site" description="in other chain" evidence="1">
    <location>
        <begin position="176"/>
        <end position="179"/>
    </location>
    <ligand>
        <name>dUMP</name>
        <dbReference type="ChEBI" id="CHEBI:246422"/>
        <note>ligand shared between dimeric partners</note>
    </ligand>
</feature>
<feature type="binding site" evidence="1">
    <location>
        <position position="179"/>
    </location>
    <ligand>
        <name>(6R)-5,10-methylene-5,6,7,8-tetrahydrofolate</name>
        <dbReference type="ChEBI" id="CHEBI:15636"/>
    </ligand>
</feature>
<feature type="binding site" description="in other chain" evidence="1">
    <location>
        <position position="187"/>
    </location>
    <ligand>
        <name>dUMP</name>
        <dbReference type="ChEBI" id="CHEBI:246422"/>
        <note>ligand shared between dimeric partners</note>
    </ligand>
</feature>
<feature type="binding site" description="in other chain" evidence="1">
    <location>
        <begin position="217"/>
        <end position="219"/>
    </location>
    <ligand>
        <name>dUMP</name>
        <dbReference type="ChEBI" id="CHEBI:246422"/>
        <note>ligand shared between dimeric partners</note>
    </ligand>
</feature>
<feature type="binding site" evidence="1">
    <location>
        <position position="272"/>
    </location>
    <ligand>
        <name>(6R)-5,10-methylene-5,6,7,8-tetrahydrofolate</name>
        <dbReference type="ChEBI" id="CHEBI:15636"/>
    </ligand>
</feature>
<keyword id="KW-0963">Cytoplasm</keyword>
<keyword id="KW-0489">Methyltransferase</keyword>
<keyword id="KW-0545">Nucleotide biosynthesis</keyword>
<keyword id="KW-1185">Reference proteome</keyword>
<keyword id="KW-0808">Transferase</keyword>
<accession>Q4JX59</accession>
<comment type="function">
    <text evidence="1">Catalyzes the reductive methylation of 2'-deoxyuridine-5'-monophosphate (dUMP) to 2'-deoxythymidine-5'-monophosphate (dTMP) while utilizing 5,10-methylenetetrahydrofolate (mTHF) as the methyl donor and reductant in the reaction, yielding dihydrofolate (DHF) as a by-product. This enzymatic reaction provides an intracellular de novo source of dTMP, an essential precursor for DNA biosynthesis.</text>
</comment>
<comment type="catalytic activity">
    <reaction evidence="1">
        <text>dUMP + (6R)-5,10-methylene-5,6,7,8-tetrahydrofolate = 7,8-dihydrofolate + dTMP</text>
        <dbReference type="Rhea" id="RHEA:12104"/>
        <dbReference type="ChEBI" id="CHEBI:15636"/>
        <dbReference type="ChEBI" id="CHEBI:57451"/>
        <dbReference type="ChEBI" id="CHEBI:63528"/>
        <dbReference type="ChEBI" id="CHEBI:246422"/>
        <dbReference type="EC" id="2.1.1.45"/>
    </reaction>
</comment>
<comment type="pathway">
    <text evidence="1">Pyrimidine metabolism; dTTP biosynthesis.</text>
</comment>
<comment type="subunit">
    <text evidence="1">Homodimer.</text>
</comment>
<comment type="subcellular location">
    <subcellularLocation>
        <location evidence="1">Cytoplasm</location>
    </subcellularLocation>
</comment>
<comment type="similarity">
    <text evidence="1">Belongs to the thymidylate synthase family. Bacterial-type ThyA subfamily.</text>
</comment>
<evidence type="ECO:0000255" key="1">
    <source>
        <dbReference type="HAMAP-Rule" id="MF_00008"/>
    </source>
</evidence>
<gene>
    <name evidence="1" type="primary">thyA</name>
    <name type="ordered locus">jk0441</name>
</gene>
<protein>
    <recommendedName>
        <fullName evidence="1">Thymidylate synthase</fullName>
        <shortName evidence="1">TS</shortName>
        <shortName evidence="1">TSase</shortName>
        <ecNumber evidence="1">2.1.1.45</ecNumber>
    </recommendedName>
</protein>
<sequence length="273" mass="30744">MAPQQQPSSIPTPYEDLLREILETGTPKGDRTGTGTTSLFGRQIRYDLSAGFPLITTKSVHVKSVVGELLWFLRGDSNVRWLQENGIRIWNEWADENGDLGPVYGVQWRSWPTPNGQHIDQIAGALETLQTNPDSRRNIVSAWNVSELDNMALPPCHLLFQLYVANGKLSCQLYQRSADMFLGVPFNIASYSLLTHMFAQQAGLEVGEFIWTGGDCHIYDNHVEQVKLQLSRDARPYPQLKLNKAADMFSYDFSDIEFTGYDPHPVIKAKVAV</sequence>
<name>TYSY_CORJK</name>
<reference key="1">
    <citation type="journal article" date="2005" name="J. Bacteriol.">
        <title>Complete genome sequence and analysis of the multiresistant nosocomial pathogen Corynebacterium jeikeium K411, a lipid-requiring bacterium of the human skin flora.</title>
        <authorList>
            <person name="Tauch A."/>
            <person name="Kaiser O."/>
            <person name="Hain T."/>
            <person name="Goesmann A."/>
            <person name="Weisshaar B."/>
            <person name="Albersmeier A."/>
            <person name="Bekel T."/>
            <person name="Bischoff N."/>
            <person name="Brune I."/>
            <person name="Chakraborty T."/>
            <person name="Kalinowski J."/>
            <person name="Meyer F."/>
            <person name="Rupp O."/>
            <person name="Schneiker S."/>
            <person name="Viehoever P."/>
            <person name="Puehler A."/>
        </authorList>
    </citation>
    <scope>NUCLEOTIDE SEQUENCE [LARGE SCALE GENOMIC DNA]</scope>
    <source>
        <strain>K411</strain>
    </source>
</reference>
<proteinExistence type="inferred from homology"/>
<dbReference type="EC" id="2.1.1.45" evidence="1"/>
<dbReference type="EMBL" id="CR931997">
    <property type="protein sequence ID" value="CAI36598.1"/>
    <property type="molecule type" value="Genomic_DNA"/>
</dbReference>
<dbReference type="RefSeq" id="WP_011273124.1">
    <property type="nucleotide sequence ID" value="NC_007164.1"/>
</dbReference>
<dbReference type="SMR" id="Q4JX59"/>
<dbReference type="STRING" id="306537.jk0441"/>
<dbReference type="KEGG" id="cjk:jk0441"/>
<dbReference type="PATRIC" id="fig|306537.10.peg.453"/>
<dbReference type="eggNOG" id="COG0207">
    <property type="taxonomic scope" value="Bacteria"/>
</dbReference>
<dbReference type="HOGENOM" id="CLU_021669_0_0_11"/>
<dbReference type="OrthoDB" id="9774633at2"/>
<dbReference type="UniPathway" id="UPA00575"/>
<dbReference type="Proteomes" id="UP000000545">
    <property type="component" value="Chromosome"/>
</dbReference>
<dbReference type="GO" id="GO:0005829">
    <property type="term" value="C:cytosol"/>
    <property type="evidence" value="ECO:0007669"/>
    <property type="project" value="TreeGrafter"/>
</dbReference>
<dbReference type="GO" id="GO:0004799">
    <property type="term" value="F:thymidylate synthase activity"/>
    <property type="evidence" value="ECO:0007669"/>
    <property type="project" value="UniProtKB-UniRule"/>
</dbReference>
<dbReference type="GO" id="GO:0006231">
    <property type="term" value="P:dTMP biosynthetic process"/>
    <property type="evidence" value="ECO:0007669"/>
    <property type="project" value="UniProtKB-UniRule"/>
</dbReference>
<dbReference type="GO" id="GO:0006235">
    <property type="term" value="P:dTTP biosynthetic process"/>
    <property type="evidence" value="ECO:0007669"/>
    <property type="project" value="UniProtKB-UniRule"/>
</dbReference>
<dbReference type="GO" id="GO:0032259">
    <property type="term" value="P:methylation"/>
    <property type="evidence" value="ECO:0007669"/>
    <property type="project" value="UniProtKB-KW"/>
</dbReference>
<dbReference type="CDD" id="cd00351">
    <property type="entry name" value="TS_Pyrimidine_HMase"/>
    <property type="match status" value="1"/>
</dbReference>
<dbReference type="FunFam" id="3.30.572.10:FF:000013">
    <property type="entry name" value="Thymidylate synthase"/>
    <property type="match status" value="1"/>
</dbReference>
<dbReference type="Gene3D" id="3.30.572.10">
    <property type="entry name" value="Thymidylate synthase/dCMP hydroxymethylase domain"/>
    <property type="match status" value="1"/>
</dbReference>
<dbReference type="HAMAP" id="MF_00008">
    <property type="entry name" value="Thymidy_synth_bact"/>
    <property type="match status" value="1"/>
</dbReference>
<dbReference type="InterPro" id="IPR045097">
    <property type="entry name" value="Thymidate_synth/dCMP_Mease"/>
</dbReference>
<dbReference type="InterPro" id="IPR023451">
    <property type="entry name" value="Thymidate_synth/dCMP_Mease_dom"/>
</dbReference>
<dbReference type="InterPro" id="IPR036926">
    <property type="entry name" value="Thymidate_synth/dCMP_Mease_sf"/>
</dbReference>
<dbReference type="InterPro" id="IPR000398">
    <property type="entry name" value="Thymidylate_synthase"/>
</dbReference>
<dbReference type="InterPro" id="IPR020940">
    <property type="entry name" value="Thymidylate_synthase_AS"/>
</dbReference>
<dbReference type="NCBIfam" id="NF002497">
    <property type="entry name" value="PRK01827.1-3"/>
    <property type="match status" value="1"/>
</dbReference>
<dbReference type="NCBIfam" id="NF002499">
    <property type="entry name" value="PRK01827.1-5"/>
    <property type="match status" value="1"/>
</dbReference>
<dbReference type="NCBIfam" id="TIGR03284">
    <property type="entry name" value="thym_sym"/>
    <property type="match status" value="2"/>
</dbReference>
<dbReference type="PANTHER" id="PTHR11548:SF9">
    <property type="entry name" value="THYMIDYLATE SYNTHASE"/>
    <property type="match status" value="1"/>
</dbReference>
<dbReference type="PANTHER" id="PTHR11548">
    <property type="entry name" value="THYMIDYLATE SYNTHASE 1"/>
    <property type="match status" value="1"/>
</dbReference>
<dbReference type="Pfam" id="PF00303">
    <property type="entry name" value="Thymidylat_synt"/>
    <property type="match status" value="1"/>
</dbReference>
<dbReference type="PRINTS" id="PR00108">
    <property type="entry name" value="THYMDSNTHASE"/>
</dbReference>
<dbReference type="SUPFAM" id="SSF55831">
    <property type="entry name" value="Thymidylate synthase/dCMP hydroxymethylase"/>
    <property type="match status" value="1"/>
</dbReference>
<dbReference type="PROSITE" id="PS00091">
    <property type="entry name" value="THYMIDYLATE_SYNTHASE"/>
    <property type="match status" value="1"/>
</dbReference>
<organism>
    <name type="scientific">Corynebacterium jeikeium (strain K411)</name>
    <dbReference type="NCBI Taxonomy" id="306537"/>
    <lineage>
        <taxon>Bacteria</taxon>
        <taxon>Bacillati</taxon>
        <taxon>Actinomycetota</taxon>
        <taxon>Actinomycetes</taxon>
        <taxon>Mycobacteriales</taxon>
        <taxon>Corynebacteriaceae</taxon>
        <taxon>Corynebacterium</taxon>
    </lineage>
</organism>